<name>DOF4_ORYSJ</name>
<evidence type="ECO:0000250" key="1">
    <source>
        <dbReference type="UniProtKB" id="Q6K537"/>
    </source>
</evidence>
<evidence type="ECO:0000255" key="2">
    <source>
        <dbReference type="PROSITE-ProRule" id="PRU00071"/>
    </source>
</evidence>
<evidence type="ECO:0000256" key="3">
    <source>
        <dbReference type="SAM" id="MobiDB-lite"/>
    </source>
</evidence>
<evidence type="ECO:0000269" key="4">
    <source>
    </source>
</evidence>
<evidence type="ECO:0000303" key="5">
    <source ref="1"/>
</evidence>
<evidence type="ECO:0000305" key="6"/>
<evidence type="ECO:0000312" key="7">
    <source>
        <dbReference type="EMBL" id="BAD16079.1"/>
    </source>
</evidence>
<evidence type="ECO:0000312" key="8">
    <source>
        <dbReference type="EMBL" id="BAF09903.1"/>
    </source>
</evidence>
<dbReference type="EMBL" id="AB028132">
    <property type="protein sequence ID" value="BAA78575.1"/>
    <property type="molecule type" value="mRNA"/>
</dbReference>
<dbReference type="EMBL" id="AP005284">
    <property type="protein sequence ID" value="BAD16079.1"/>
    <property type="molecule type" value="Genomic_DNA"/>
</dbReference>
<dbReference type="EMBL" id="AP008208">
    <property type="protein sequence ID" value="BAF09903.1"/>
    <property type="molecule type" value="Genomic_DNA"/>
</dbReference>
<dbReference type="EMBL" id="AP014958">
    <property type="protein sequence ID" value="BAS80698.1"/>
    <property type="molecule type" value="Genomic_DNA"/>
</dbReference>
<dbReference type="EMBL" id="AK061000">
    <property type="protein sequence ID" value="BAG87667.1"/>
    <property type="molecule type" value="mRNA"/>
</dbReference>
<dbReference type="EMBL" id="AK101321">
    <property type="protein sequence ID" value="BAG95006.1"/>
    <property type="molecule type" value="mRNA"/>
</dbReference>
<dbReference type="EMBL" id="GQ183532">
    <property type="protein sequence ID" value="ACT31342.1"/>
    <property type="molecule type" value="mRNA"/>
</dbReference>
<dbReference type="RefSeq" id="XP_015623188.1">
    <property type="nucleotide sequence ID" value="XM_015767702.1"/>
</dbReference>
<dbReference type="FunCoup" id="Q6Z345">
    <property type="interactions" value="36"/>
</dbReference>
<dbReference type="IntAct" id="Q6Z345">
    <property type="interactions" value="3"/>
</dbReference>
<dbReference type="PaxDb" id="39947-Q6Z345"/>
<dbReference type="EnsemblPlants" id="Os02t0726300-01">
    <property type="protein sequence ID" value="Os02t0726300-01"/>
    <property type="gene ID" value="Os02g0726300"/>
</dbReference>
<dbReference type="EnsemblPlants" id="Os02t0726300-03">
    <property type="protein sequence ID" value="Os02t0726300-03"/>
    <property type="gene ID" value="Os02g0726300"/>
</dbReference>
<dbReference type="Gramene" id="Os02t0726300-01">
    <property type="protein sequence ID" value="Os02t0726300-01"/>
    <property type="gene ID" value="Os02g0726300"/>
</dbReference>
<dbReference type="Gramene" id="Os02t0726300-03">
    <property type="protein sequence ID" value="Os02t0726300-03"/>
    <property type="gene ID" value="Os02g0726300"/>
</dbReference>
<dbReference type="KEGG" id="dosa:Os02g0726300"/>
<dbReference type="eggNOG" id="ENOG502QRBR">
    <property type="taxonomic scope" value="Eukaryota"/>
</dbReference>
<dbReference type="HOGENOM" id="CLU_075415_1_0_1"/>
<dbReference type="InParanoid" id="Q6Z345"/>
<dbReference type="OMA" id="CWTDVVQ"/>
<dbReference type="OrthoDB" id="1927254at2759"/>
<dbReference type="Proteomes" id="UP000000763">
    <property type="component" value="Chromosome 2"/>
</dbReference>
<dbReference type="Proteomes" id="UP000059680">
    <property type="component" value="Chromosome 2"/>
</dbReference>
<dbReference type="GO" id="GO:0005634">
    <property type="term" value="C:nucleus"/>
    <property type="evidence" value="ECO:0007669"/>
    <property type="project" value="UniProtKB-SubCell"/>
</dbReference>
<dbReference type="GO" id="GO:0003677">
    <property type="term" value="F:DNA binding"/>
    <property type="evidence" value="ECO:0007669"/>
    <property type="project" value="UniProtKB-KW"/>
</dbReference>
<dbReference type="GO" id="GO:0003700">
    <property type="term" value="F:DNA-binding transcription factor activity"/>
    <property type="evidence" value="ECO:0007669"/>
    <property type="project" value="InterPro"/>
</dbReference>
<dbReference type="GO" id="GO:0008270">
    <property type="term" value="F:zinc ion binding"/>
    <property type="evidence" value="ECO:0007669"/>
    <property type="project" value="UniProtKB-KW"/>
</dbReference>
<dbReference type="InterPro" id="IPR045174">
    <property type="entry name" value="Dof"/>
</dbReference>
<dbReference type="InterPro" id="IPR003851">
    <property type="entry name" value="Znf_Dof"/>
</dbReference>
<dbReference type="PANTHER" id="PTHR31992:SF298">
    <property type="entry name" value="DOF ZINC FINGER PROTEIN 4"/>
    <property type="match status" value="1"/>
</dbReference>
<dbReference type="PANTHER" id="PTHR31992">
    <property type="entry name" value="DOF ZINC FINGER PROTEIN DOF1.4-RELATED"/>
    <property type="match status" value="1"/>
</dbReference>
<dbReference type="Pfam" id="PF02701">
    <property type="entry name" value="Zn_ribbon_Dof"/>
    <property type="match status" value="1"/>
</dbReference>
<dbReference type="PROSITE" id="PS01361">
    <property type="entry name" value="ZF_DOF_1"/>
    <property type="match status" value="1"/>
</dbReference>
<dbReference type="PROSITE" id="PS50884">
    <property type="entry name" value="ZF_DOF_2"/>
    <property type="match status" value="1"/>
</dbReference>
<feature type="chain" id="PRO_0000441230" description="Dof zinc finger protein 4">
    <location>
        <begin position="1"/>
        <end position="282"/>
    </location>
</feature>
<feature type="zinc finger region" description="Dof-type" evidence="2">
    <location>
        <begin position="45"/>
        <end position="99"/>
    </location>
</feature>
<feature type="region of interest" description="Disordered" evidence="3">
    <location>
        <begin position="89"/>
        <end position="161"/>
    </location>
</feature>
<feature type="compositionally biased region" description="Low complexity" evidence="3">
    <location>
        <begin position="102"/>
        <end position="117"/>
    </location>
</feature>
<feature type="compositionally biased region" description="Low complexity" evidence="3">
    <location>
        <begin position="125"/>
        <end position="161"/>
    </location>
</feature>
<feature type="binding site" evidence="2">
    <location>
        <position position="47"/>
    </location>
    <ligand>
        <name>Zn(2+)</name>
        <dbReference type="ChEBI" id="CHEBI:29105"/>
    </ligand>
</feature>
<feature type="binding site" evidence="2">
    <location>
        <position position="50"/>
    </location>
    <ligand>
        <name>Zn(2+)</name>
        <dbReference type="ChEBI" id="CHEBI:29105"/>
    </ligand>
</feature>
<feature type="binding site" evidence="2">
    <location>
        <position position="72"/>
    </location>
    <ligand>
        <name>Zn(2+)</name>
        <dbReference type="ChEBI" id="CHEBI:29105"/>
    </ligand>
</feature>
<feature type="binding site" evidence="2">
    <location>
        <position position="75"/>
    </location>
    <ligand>
        <name>Zn(2+)</name>
        <dbReference type="ChEBI" id="CHEBI:29105"/>
    </ligand>
</feature>
<sequence length="282" mass="28962">MQEFQSIPGLAGRLFGGAAAADIRRAQAQQGPASRCGGIPSPEAVKCPRCESTNTKFCYYNNYNLSQPRHFCKSCRRYWTKGGVLRNVPVGGGCRKTKRSGSSSAASSAPSTPTAATDNAKNQRRASASSPRSSSGGSGNTSPTAAAATTPTTPATPSSNTIAVINHATTTTTTTNPFPTDVPPPAPIFADQAAALASLFAPPPPPPLPVFSFAAQAKTEDGIASVLLAGQTTAPTAATVADMTPFTSLDAGIFELGDVPPAAYWNAGSCWTDVPDPNVYLP</sequence>
<protein>
    <recommendedName>
        <fullName evidence="6">Dof zinc finger protein 4</fullName>
        <shortName evidence="5">OsDof4</shortName>
    </recommendedName>
</protein>
<reference key="1">
    <citation type="online journal article" date="1999" name="Plant Gene Register">
        <title>Molecular analysis of rice cDNAs encoding Dof proteins in germinated aleurone cells.</title>
        <authorList>
            <person name="Washio K."/>
        </authorList>
        <locator>PGR99-107</locator>
    </citation>
    <scope>NUCLEOTIDE SEQUENCE [MRNA]</scope>
    <source>
        <strain>cv. Yukihikari</strain>
        <tissue>Aleurone</tissue>
    </source>
</reference>
<reference key="2">
    <citation type="journal article" date="2005" name="Nature">
        <title>The map-based sequence of the rice genome.</title>
        <authorList>
            <consortium name="International rice genome sequencing project (IRGSP)"/>
        </authorList>
    </citation>
    <scope>NUCLEOTIDE SEQUENCE [LARGE SCALE GENOMIC DNA]</scope>
    <source>
        <strain>cv. Nipponbare</strain>
    </source>
</reference>
<reference key="3">
    <citation type="journal article" date="2008" name="Nucleic Acids Res.">
        <title>The rice annotation project database (RAP-DB): 2008 update.</title>
        <authorList>
            <consortium name="The rice annotation project (RAP)"/>
        </authorList>
    </citation>
    <scope>GENOME REANNOTATION</scope>
    <source>
        <strain>cv. Nipponbare</strain>
    </source>
</reference>
<reference key="4">
    <citation type="journal article" date="2013" name="Rice">
        <title>Improvement of the Oryza sativa Nipponbare reference genome using next generation sequence and optical map data.</title>
        <authorList>
            <person name="Kawahara Y."/>
            <person name="de la Bastide M."/>
            <person name="Hamilton J.P."/>
            <person name="Kanamori H."/>
            <person name="McCombie W.R."/>
            <person name="Ouyang S."/>
            <person name="Schwartz D.C."/>
            <person name="Tanaka T."/>
            <person name="Wu J."/>
            <person name="Zhou S."/>
            <person name="Childs K.L."/>
            <person name="Davidson R.M."/>
            <person name="Lin H."/>
            <person name="Quesada-Ocampo L."/>
            <person name="Vaillancourt B."/>
            <person name="Sakai H."/>
            <person name="Lee S.S."/>
            <person name="Kim J."/>
            <person name="Numa H."/>
            <person name="Itoh T."/>
            <person name="Buell C.R."/>
            <person name="Matsumoto T."/>
        </authorList>
    </citation>
    <scope>GENOME REANNOTATION</scope>
    <source>
        <strain>cv. Nipponbare</strain>
    </source>
</reference>
<reference key="5">
    <citation type="journal article" date="2003" name="Science">
        <title>Collection, mapping, and annotation of over 28,000 cDNA clones from japonica rice.</title>
        <authorList>
            <consortium name="The rice full-length cDNA consortium"/>
        </authorList>
    </citation>
    <scope>NUCLEOTIDE SEQUENCE [LARGE SCALE MRNA]</scope>
    <source>
        <strain>cv. Nipponbare</strain>
    </source>
</reference>
<reference key="6">
    <citation type="submission" date="2009-05" db="EMBL/GenBank/DDBJ databases">
        <title>Oryza sativa japonica group Dof-type zinc finger protein 05 mRNA, partial cds.</title>
        <authorList>
            <person name="Gaur V.S."/>
            <person name="Singh U.S."/>
            <person name="Singh V.K."/>
            <person name="Kumar A."/>
        </authorList>
    </citation>
    <scope>NUCLEOTIDE SEQUENCE [MRNA] OF 18-205</scope>
    <source>
        <strain>cv. Nipponbare</strain>
    </source>
</reference>
<reference key="7">
    <citation type="journal article" date="2001" name="Biochim. Biophys. Acta">
        <title>Identification of Dof proteins with implication in the gibberellin-regulated expression of a peptidase gene following the germination of rice grains.</title>
        <authorList>
            <person name="Washio K."/>
        </authorList>
    </citation>
    <scope>DEVELOPMENTAL STAGE</scope>
    <scope>INDUCTION BY GIBBERELLIN</scope>
</reference>
<comment type="function">
    <text evidence="1">Transcription factor that may transactivate seed storage protein genes in developing seeds.</text>
</comment>
<comment type="subcellular location">
    <subcellularLocation>
        <location evidence="2">Nucleus</location>
    </subcellularLocation>
</comment>
<comment type="developmental stage">
    <text evidence="4">Expressed in germinating seeds up to 5 days after imbibition.</text>
</comment>
<comment type="induction">
    <text evidence="4">Induced by gibberellin.</text>
</comment>
<proteinExistence type="evidence at transcript level"/>
<organism>
    <name type="scientific">Oryza sativa subsp. japonica</name>
    <name type="common">Rice</name>
    <dbReference type="NCBI Taxonomy" id="39947"/>
    <lineage>
        <taxon>Eukaryota</taxon>
        <taxon>Viridiplantae</taxon>
        <taxon>Streptophyta</taxon>
        <taxon>Embryophyta</taxon>
        <taxon>Tracheophyta</taxon>
        <taxon>Spermatophyta</taxon>
        <taxon>Magnoliopsida</taxon>
        <taxon>Liliopsida</taxon>
        <taxon>Poales</taxon>
        <taxon>Poaceae</taxon>
        <taxon>BOP clade</taxon>
        <taxon>Oryzoideae</taxon>
        <taxon>Oryzeae</taxon>
        <taxon>Oryzinae</taxon>
        <taxon>Oryza</taxon>
        <taxon>Oryza sativa</taxon>
    </lineage>
</organism>
<keyword id="KW-0238">DNA-binding</keyword>
<keyword id="KW-0479">Metal-binding</keyword>
<keyword id="KW-0539">Nucleus</keyword>
<keyword id="KW-1185">Reference proteome</keyword>
<keyword id="KW-0804">Transcription</keyword>
<keyword id="KW-0805">Transcription regulation</keyword>
<keyword id="KW-0862">Zinc</keyword>
<keyword id="KW-0863">Zinc-finger</keyword>
<accession>Q6Z345</accession>
<accession>C7DQD6</accession>
<accession>Q9SXG5</accession>
<gene>
    <name evidence="5" type="primary">DOF4</name>
    <name evidence="8" type="ordered locus">Os02g0726300</name>
    <name evidence="6" type="ordered locus">LOC_Os02g49440</name>
    <name evidence="7" type="ORF">B1121A12.10</name>
</gene>